<proteinExistence type="inferred from homology"/>
<reference key="1">
    <citation type="journal article" date="2007" name="J. Bacteriol.">
        <title>Complete genome of acute rheumatic fever-associated serotype M5 Streptococcus pyogenes strain Manfredo.</title>
        <authorList>
            <person name="Holden M.T.G."/>
            <person name="Scott A."/>
            <person name="Cherevach I."/>
            <person name="Chillingworth T."/>
            <person name="Churcher C."/>
            <person name="Cronin A."/>
            <person name="Dowd L."/>
            <person name="Feltwell T."/>
            <person name="Hamlin N."/>
            <person name="Holroyd S."/>
            <person name="Jagels K."/>
            <person name="Moule S."/>
            <person name="Mungall K."/>
            <person name="Quail M.A."/>
            <person name="Price C."/>
            <person name="Rabbinowitsch E."/>
            <person name="Sharp S."/>
            <person name="Skelton J."/>
            <person name="Whitehead S."/>
            <person name="Barrell B.G."/>
            <person name="Kehoe M."/>
            <person name="Parkhill J."/>
        </authorList>
    </citation>
    <scope>NUCLEOTIDE SEQUENCE [LARGE SCALE GENOMIC DNA]</scope>
    <source>
        <strain>Manfredo</strain>
    </source>
</reference>
<accession>A2RDN1</accession>
<sequence length="71" mass="7988">MSKTKTFEENLQDLETIVNKLENGDVPLEEAISEFQKGMLLSKELQKTLQAAEKTLVKVMQADGTEVDMDD</sequence>
<organism>
    <name type="scientific">Streptococcus pyogenes serotype M5 (strain Manfredo)</name>
    <dbReference type="NCBI Taxonomy" id="160491"/>
    <lineage>
        <taxon>Bacteria</taxon>
        <taxon>Bacillati</taxon>
        <taxon>Bacillota</taxon>
        <taxon>Bacilli</taxon>
        <taxon>Lactobacillales</taxon>
        <taxon>Streptococcaceae</taxon>
        <taxon>Streptococcus</taxon>
    </lineage>
</organism>
<dbReference type="EC" id="3.1.11.6" evidence="1"/>
<dbReference type="EMBL" id="AM295007">
    <property type="protein sequence ID" value="CAM29956.1"/>
    <property type="molecule type" value="Genomic_DNA"/>
</dbReference>
<dbReference type="RefSeq" id="WP_002983901.1">
    <property type="nucleotide sequence ID" value="NC_009332.1"/>
</dbReference>
<dbReference type="SMR" id="A2RDN1"/>
<dbReference type="KEGG" id="spf:SpyM50621"/>
<dbReference type="HOGENOM" id="CLU_145918_3_2_9"/>
<dbReference type="GO" id="GO:0005829">
    <property type="term" value="C:cytosol"/>
    <property type="evidence" value="ECO:0007669"/>
    <property type="project" value="TreeGrafter"/>
</dbReference>
<dbReference type="GO" id="GO:0009318">
    <property type="term" value="C:exodeoxyribonuclease VII complex"/>
    <property type="evidence" value="ECO:0007669"/>
    <property type="project" value="InterPro"/>
</dbReference>
<dbReference type="GO" id="GO:0008855">
    <property type="term" value="F:exodeoxyribonuclease VII activity"/>
    <property type="evidence" value="ECO:0007669"/>
    <property type="project" value="UniProtKB-UniRule"/>
</dbReference>
<dbReference type="GO" id="GO:0006308">
    <property type="term" value="P:DNA catabolic process"/>
    <property type="evidence" value="ECO:0007669"/>
    <property type="project" value="UniProtKB-UniRule"/>
</dbReference>
<dbReference type="Gene3D" id="1.10.287.1040">
    <property type="entry name" value="Exonuclease VII, small subunit"/>
    <property type="match status" value="1"/>
</dbReference>
<dbReference type="HAMAP" id="MF_00337">
    <property type="entry name" value="Exonuc_7_S"/>
    <property type="match status" value="1"/>
</dbReference>
<dbReference type="InterPro" id="IPR003761">
    <property type="entry name" value="Exonuc_VII_S"/>
</dbReference>
<dbReference type="InterPro" id="IPR037004">
    <property type="entry name" value="Exonuc_VII_ssu_sf"/>
</dbReference>
<dbReference type="NCBIfam" id="NF002138">
    <property type="entry name" value="PRK00977.1-2"/>
    <property type="match status" value="1"/>
</dbReference>
<dbReference type="NCBIfam" id="TIGR01280">
    <property type="entry name" value="xseB"/>
    <property type="match status" value="1"/>
</dbReference>
<dbReference type="PANTHER" id="PTHR34137">
    <property type="entry name" value="EXODEOXYRIBONUCLEASE 7 SMALL SUBUNIT"/>
    <property type="match status" value="1"/>
</dbReference>
<dbReference type="PANTHER" id="PTHR34137:SF1">
    <property type="entry name" value="EXODEOXYRIBONUCLEASE 7 SMALL SUBUNIT"/>
    <property type="match status" value="1"/>
</dbReference>
<dbReference type="Pfam" id="PF02609">
    <property type="entry name" value="Exonuc_VII_S"/>
    <property type="match status" value="1"/>
</dbReference>
<dbReference type="PIRSF" id="PIRSF006488">
    <property type="entry name" value="Exonuc_VII_S"/>
    <property type="match status" value="1"/>
</dbReference>
<dbReference type="SUPFAM" id="SSF116842">
    <property type="entry name" value="XseB-like"/>
    <property type="match status" value="1"/>
</dbReference>
<feature type="chain" id="PRO_0000303761" description="Exodeoxyribonuclease 7 small subunit">
    <location>
        <begin position="1"/>
        <end position="71"/>
    </location>
</feature>
<name>EX7S_STRPG</name>
<gene>
    <name evidence="1" type="primary">xseB</name>
    <name type="ordered locus">SpyM50621</name>
</gene>
<protein>
    <recommendedName>
        <fullName evidence="1">Exodeoxyribonuclease 7 small subunit</fullName>
        <ecNumber evidence="1">3.1.11.6</ecNumber>
    </recommendedName>
    <alternativeName>
        <fullName evidence="1">Exodeoxyribonuclease VII small subunit</fullName>
        <shortName evidence="1">Exonuclease VII small subunit</shortName>
    </alternativeName>
</protein>
<keyword id="KW-0963">Cytoplasm</keyword>
<keyword id="KW-0269">Exonuclease</keyword>
<keyword id="KW-0378">Hydrolase</keyword>
<keyword id="KW-0540">Nuclease</keyword>
<evidence type="ECO:0000255" key="1">
    <source>
        <dbReference type="HAMAP-Rule" id="MF_00337"/>
    </source>
</evidence>
<comment type="function">
    <text evidence="1">Bidirectionally degrades single-stranded DNA into large acid-insoluble oligonucleotides, which are then degraded further into small acid-soluble oligonucleotides.</text>
</comment>
<comment type="catalytic activity">
    <reaction evidence="1">
        <text>Exonucleolytic cleavage in either 5'- to 3'- or 3'- to 5'-direction to yield nucleoside 5'-phosphates.</text>
        <dbReference type="EC" id="3.1.11.6"/>
    </reaction>
</comment>
<comment type="subunit">
    <text evidence="1">Heterooligomer composed of large and small subunits.</text>
</comment>
<comment type="subcellular location">
    <subcellularLocation>
        <location evidence="1">Cytoplasm</location>
    </subcellularLocation>
</comment>
<comment type="similarity">
    <text evidence="1">Belongs to the XseB family.</text>
</comment>